<comment type="function">
    <text evidence="1">Cell wall formation. Adds enolpyruvyl to UDP-N-acetylglucosamine.</text>
</comment>
<comment type="catalytic activity">
    <reaction evidence="1">
        <text>phosphoenolpyruvate + UDP-N-acetyl-alpha-D-glucosamine = UDP-N-acetyl-3-O-(1-carboxyvinyl)-alpha-D-glucosamine + phosphate</text>
        <dbReference type="Rhea" id="RHEA:18681"/>
        <dbReference type="ChEBI" id="CHEBI:43474"/>
        <dbReference type="ChEBI" id="CHEBI:57705"/>
        <dbReference type="ChEBI" id="CHEBI:58702"/>
        <dbReference type="ChEBI" id="CHEBI:68483"/>
        <dbReference type="EC" id="2.5.1.7"/>
    </reaction>
</comment>
<comment type="pathway">
    <text evidence="1">Cell wall biogenesis; peptidoglycan biosynthesis.</text>
</comment>
<comment type="subcellular location">
    <subcellularLocation>
        <location evidence="1">Cytoplasm</location>
    </subcellularLocation>
</comment>
<comment type="similarity">
    <text evidence="1">Belongs to the EPSP synthase family. MurA subfamily.</text>
</comment>
<dbReference type="EC" id="2.5.1.7" evidence="1"/>
<dbReference type="EMBL" id="AE015929">
    <property type="protein sequence ID" value="AAO05321.1"/>
    <property type="molecule type" value="Genomic_DNA"/>
</dbReference>
<dbReference type="RefSeq" id="NP_765277.1">
    <property type="nucleotide sequence ID" value="NC_004461.1"/>
</dbReference>
<dbReference type="RefSeq" id="WP_002485257.1">
    <property type="nucleotide sequence ID" value="NC_004461.1"/>
</dbReference>
<dbReference type="SMR" id="Q8CRM7"/>
<dbReference type="KEGG" id="sep:SE_1722"/>
<dbReference type="PATRIC" id="fig|176280.10.peg.1682"/>
<dbReference type="eggNOG" id="COG0766">
    <property type="taxonomic scope" value="Bacteria"/>
</dbReference>
<dbReference type="HOGENOM" id="CLU_027387_0_0_9"/>
<dbReference type="OrthoDB" id="9803760at2"/>
<dbReference type="UniPathway" id="UPA00219"/>
<dbReference type="Proteomes" id="UP000001411">
    <property type="component" value="Chromosome"/>
</dbReference>
<dbReference type="GO" id="GO:0005737">
    <property type="term" value="C:cytoplasm"/>
    <property type="evidence" value="ECO:0007669"/>
    <property type="project" value="UniProtKB-SubCell"/>
</dbReference>
<dbReference type="GO" id="GO:0008760">
    <property type="term" value="F:UDP-N-acetylglucosamine 1-carboxyvinyltransferase activity"/>
    <property type="evidence" value="ECO:0007669"/>
    <property type="project" value="UniProtKB-UniRule"/>
</dbReference>
<dbReference type="GO" id="GO:0051301">
    <property type="term" value="P:cell division"/>
    <property type="evidence" value="ECO:0007669"/>
    <property type="project" value="UniProtKB-KW"/>
</dbReference>
<dbReference type="GO" id="GO:0071555">
    <property type="term" value="P:cell wall organization"/>
    <property type="evidence" value="ECO:0007669"/>
    <property type="project" value="UniProtKB-KW"/>
</dbReference>
<dbReference type="GO" id="GO:0009252">
    <property type="term" value="P:peptidoglycan biosynthetic process"/>
    <property type="evidence" value="ECO:0007669"/>
    <property type="project" value="UniProtKB-UniRule"/>
</dbReference>
<dbReference type="GO" id="GO:0008360">
    <property type="term" value="P:regulation of cell shape"/>
    <property type="evidence" value="ECO:0007669"/>
    <property type="project" value="UniProtKB-KW"/>
</dbReference>
<dbReference type="GO" id="GO:0019277">
    <property type="term" value="P:UDP-N-acetylgalactosamine biosynthetic process"/>
    <property type="evidence" value="ECO:0007669"/>
    <property type="project" value="InterPro"/>
</dbReference>
<dbReference type="CDD" id="cd01555">
    <property type="entry name" value="UdpNAET"/>
    <property type="match status" value="1"/>
</dbReference>
<dbReference type="FunFam" id="3.65.10.10:FF:000001">
    <property type="entry name" value="UDP-N-acetylglucosamine 1-carboxyvinyltransferase"/>
    <property type="match status" value="1"/>
</dbReference>
<dbReference type="Gene3D" id="3.65.10.10">
    <property type="entry name" value="Enolpyruvate transferase domain"/>
    <property type="match status" value="2"/>
</dbReference>
<dbReference type="HAMAP" id="MF_00111">
    <property type="entry name" value="MurA"/>
    <property type="match status" value="1"/>
</dbReference>
<dbReference type="InterPro" id="IPR001986">
    <property type="entry name" value="Enolpyruvate_Tfrase_dom"/>
</dbReference>
<dbReference type="InterPro" id="IPR036968">
    <property type="entry name" value="Enolpyruvate_Tfrase_sf"/>
</dbReference>
<dbReference type="InterPro" id="IPR050068">
    <property type="entry name" value="MurA_subfamily"/>
</dbReference>
<dbReference type="InterPro" id="IPR013792">
    <property type="entry name" value="RNA3'P_cycl/enolpyr_Trfase_a/b"/>
</dbReference>
<dbReference type="InterPro" id="IPR005750">
    <property type="entry name" value="UDP_GlcNAc_COvinyl_MurA"/>
</dbReference>
<dbReference type="NCBIfam" id="TIGR01072">
    <property type="entry name" value="murA"/>
    <property type="match status" value="1"/>
</dbReference>
<dbReference type="NCBIfam" id="NF006873">
    <property type="entry name" value="PRK09369.1"/>
    <property type="match status" value="1"/>
</dbReference>
<dbReference type="NCBIfam" id="NF009470">
    <property type="entry name" value="PRK12830.1"/>
    <property type="match status" value="1"/>
</dbReference>
<dbReference type="PANTHER" id="PTHR43783">
    <property type="entry name" value="UDP-N-ACETYLGLUCOSAMINE 1-CARBOXYVINYLTRANSFERASE"/>
    <property type="match status" value="1"/>
</dbReference>
<dbReference type="PANTHER" id="PTHR43783:SF2">
    <property type="entry name" value="UDP-N-ACETYLGLUCOSAMINE 1-CARBOXYVINYLTRANSFERASE 2"/>
    <property type="match status" value="1"/>
</dbReference>
<dbReference type="Pfam" id="PF00275">
    <property type="entry name" value="EPSP_synthase"/>
    <property type="match status" value="1"/>
</dbReference>
<dbReference type="SUPFAM" id="SSF55205">
    <property type="entry name" value="EPT/RTPC-like"/>
    <property type="match status" value="1"/>
</dbReference>
<reference key="1">
    <citation type="journal article" date="2003" name="Mol. Microbiol.">
        <title>Genome-based analysis of virulence genes in a non-biofilm-forming Staphylococcus epidermidis strain (ATCC 12228).</title>
        <authorList>
            <person name="Zhang Y.-Q."/>
            <person name="Ren S.-X."/>
            <person name="Li H.-L."/>
            <person name="Wang Y.-X."/>
            <person name="Fu G."/>
            <person name="Yang J."/>
            <person name="Qin Z.-Q."/>
            <person name="Miao Y.-G."/>
            <person name="Wang W.-Y."/>
            <person name="Chen R.-S."/>
            <person name="Shen Y."/>
            <person name="Chen Z."/>
            <person name="Yuan Z.-H."/>
            <person name="Zhao G.-P."/>
            <person name="Qu D."/>
            <person name="Danchin A."/>
            <person name="Wen Y.-M."/>
        </authorList>
    </citation>
    <scope>NUCLEOTIDE SEQUENCE [LARGE SCALE GENOMIC DNA]</scope>
    <source>
        <strain>ATCC 12228 / FDA PCI 1200</strain>
    </source>
</reference>
<evidence type="ECO:0000255" key="1">
    <source>
        <dbReference type="HAMAP-Rule" id="MF_00111"/>
    </source>
</evidence>
<keyword id="KW-0131">Cell cycle</keyword>
<keyword id="KW-0132">Cell division</keyword>
<keyword id="KW-0133">Cell shape</keyword>
<keyword id="KW-0961">Cell wall biogenesis/degradation</keyword>
<keyword id="KW-0963">Cytoplasm</keyword>
<keyword id="KW-0573">Peptidoglycan synthesis</keyword>
<keyword id="KW-0670">Pyruvate</keyword>
<keyword id="KW-0808">Transferase</keyword>
<protein>
    <recommendedName>
        <fullName evidence="1">UDP-N-acetylglucosamine 1-carboxyvinyltransferase 2</fullName>
        <ecNumber evidence="1">2.5.1.7</ecNumber>
    </recommendedName>
    <alternativeName>
        <fullName evidence="1">Enoylpyruvate transferase 2</fullName>
    </alternativeName>
    <alternativeName>
        <fullName evidence="1">UDP-N-acetylglucosamine enolpyruvyl transferase 2</fullName>
        <shortName evidence="1">EPT 2</shortName>
    </alternativeName>
</protein>
<gene>
    <name evidence="1" type="primary">murA2</name>
    <name type="synonym">murZ</name>
    <name type="ordered locus">SE_1722</name>
</gene>
<proteinExistence type="inferred from homology"/>
<organism>
    <name type="scientific">Staphylococcus epidermidis (strain ATCC 12228 / FDA PCI 1200)</name>
    <dbReference type="NCBI Taxonomy" id="176280"/>
    <lineage>
        <taxon>Bacteria</taxon>
        <taxon>Bacillati</taxon>
        <taxon>Bacillota</taxon>
        <taxon>Bacilli</taxon>
        <taxon>Bacillales</taxon>
        <taxon>Staphylococcaceae</taxon>
        <taxon>Staphylococcus</taxon>
    </lineage>
</organism>
<name>MURA2_STAES</name>
<feature type="chain" id="PRO_0000178927" description="UDP-N-acetylglucosamine 1-carboxyvinyltransferase 2">
    <location>
        <begin position="1"/>
        <end position="419"/>
    </location>
</feature>
<feature type="active site" description="Proton donor" evidence="1">
    <location>
        <position position="118"/>
    </location>
</feature>
<feature type="binding site" evidence="1">
    <location>
        <begin position="24"/>
        <end position="25"/>
    </location>
    <ligand>
        <name>phosphoenolpyruvate</name>
        <dbReference type="ChEBI" id="CHEBI:58702"/>
    </ligand>
</feature>
<feature type="binding site" evidence="1">
    <location>
        <position position="94"/>
    </location>
    <ligand>
        <name>UDP-N-acetyl-alpha-D-glucosamine</name>
        <dbReference type="ChEBI" id="CHEBI:57705"/>
    </ligand>
</feature>
<feature type="binding site" evidence="1">
    <location>
        <begin position="123"/>
        <end position="127"/>
    </location>
    <ligand>
        <name>UDP-N-acetyl-alpha-D-glucosamine</name>
        <dbReference type="ChEBI" id="CHEBI:57705"/>
    </ligand>
</feature>
<feature type="binding site" evidence="1">
    <location>
        <position position="307"/>
    </location>
    <ligand>
        <name>UDP-N-acetyl-alpha-D-glucosamine</name>
        <dbReference type="ChEBI" id="CHEBI:57705"/>
    </ligand>
</feature>
<feature type="binding site" evidence="1">
    <location>
        <position position="329"/>
    </location>
    <ligand>
        <name>UDP-N-acetyl-alpha-D-glucosamine</name>
        <dbReference type="ChEBI" id="CHEBI:57705"/>
    </ligand>
</feature>
<feature type="modified residue" description="2-(S-cysteinyl)pyruvic acid O-phosphothioketal" evidence="1">
    <location>
        <position position="118"/>
    </location>
</feature>
<sequence>MAQEVIKIRGGQALKGEVEISGAKNSAVAIIPATLLAQGQVKLEGLPQISDVETLVSLLEDLNIEARLNGKQLEVDTTQIENAPLPNNKVESLRASYYMMGAMLGRFKKCVIGLPGGCPLGPRPIDQHIKGFKALGAEIDESSNTSMKLVAKELRGAHIFLDMVSVGATINIMLAAVHAKGQTVIDNAAKEPEVVDVANFLMSMGADIRGAGTTSIKINGVEELKGSEYQIIPDRIEAGSYMCMAAAMGEEVILHNIVPKHVEALTVKLQELGVDIEIEDEKIIIRKQTPYKNVDIKTLVYPGFATDLQQPITPLLFMTEGPSFVTDTIYPARFKHVEELQCMGANIKSDEGTAVIKPSTLNGAEVYASDLRAGACLITAGLIAEGVTTIFNVKHIYRGYTNIVEHLKALGADIWTETV</sequence>
<accession>Q8CRM7</accession>